<dbReference type="EMBL" id="CP000777">
    <property type="protein sequence ID" value="ABZ93858.1"/>
    <property type="molecule type" value="Genomic_DNA"/>
</dbReference>
<dbReference type="RefSeq" id="WP_012388381.1">
    <property type="nucleotide sequence ID" value="NC_010842.1"/>
</dbReference>
<dbReference type="SMR" id="B0SGD4"/>
<dbReference type="KEGG" id="lbf:LBF_1338"/>
<dbReference type="HOGENOM" id="CLU_099839_1_0_12"/>
<dbReference type="GO" id="GO:0005829">
    <property type="term" value="C:cytosol"/>
    <property type="evidence" value="ECO:0007669"/>
    <property type="project" value="TreeGrafter"/>
</dbReference>
<dbReference type="GO" id="GO:0000166">
    <property type="term" value="F:nucleotide binding"/>
    <property type="evidence" value="ECO:0007669"/>
    <property type="project" value="TreeGrafter"/>
</dbReference>
<dbReference type="CDD" id="cd11740">
    <property type="entry name" value="YajQ_like"/>
    <property type="match status" value="1"/>
</dbReference>
<dbReference type="FunFam" id="3.30.70.990:FF:000002">
    <property type="entry name" value="UPF0234 protein LEP1GSC067_4943"/>
    <property type="match status" value="1"/>
</dbReference>
<dbReference type="Gene3D" id="3.30.70.860">
    <property type="match status" value="1"/>
</dbReference>
<dbReference type="Gene3D" id="3.30.70.990">
    <property type="entry name" value="YajQ-like, domain 2"/>
    <property type="match status" value="1"/>
</dbReference>
<dbReference type="HAMAP" id="MF_00632">
    <property type="entry name" value="YajQ"/>
    <property type="match status" value="1"/>
</dbReference>
<dbReference type="InterPro" id="IPR007551">
    <property type="entry name" value="DUF520"/>
</dbReference>
<dbReference type="InterPro" id="IPR035571">
    <property type="entry name" value="UPF0234-like_C"/>
</dbReference>
<dbReference type="InterPro" id="IPR035570">
    <property type="entry name" value="UPF0234_N"/>
</dbReference>
<dbReference type="InterPro" id="IPR036183">
    <property type="entry name" value="YajQ-like_sf"/>
</dbReference>
<dbReference type="NCBIfam" id="NF003819">
    <property type="entry name" value="PRK05412.1"/>
    <property type="match status" value="1"/>
</dbReference>
<dbReference type="PANTHER" id="PTHR30476">
    <property type="entry name" value="UPF0234 PROTEIN YAJQ"/>
    <property type="match status" value="1"/>
</dbReference>
<dbReference type="PANTHER" id="PTHR30476:SF0">
    <property type="entry name" value="UPF0234 PROTEIN YAJQ"/>
    <property type="match status" value="1"/>
</dbReference>
<dbReference type="Pfam" id="PF04461">
    <property type="entry name" value="DUF520"/>
    <property type="match status" value="1"/>
</dbReference>
<dbReference type="SUPFAM" id="SSF89963">
    <property type="entry name" value="YajQ-like"/>
    <property type="match status" value="2"/>
</dbReference>
<feature type="chain" id="PRO_1000130634" description="Nucleotide-binding protein LBF_1338">
    <location>
        <begin position="1"/>
        <end position="165"/>
    </location>
</feature>
<name>Y1338_LEPBA</name>
<evidence type="ECO:0000255" key="1">
    <source>
        <dbReference type="HAMAP-Rule" id="MF_00632"/>
    </source>
</evidence>
<proteinExistence type="inferred from homology"/>
<organism>
    <name type="scientific">Leptospira biflexa serovar Patoc (strain Patoc 1 / Ames)</name>
    <dbReference type="NCBI Taxonomy" id="355278"/>
    <lineage>
        <taxon>Bacteria</taxon>
        <taxon>Pseudomonadati</taxon>
        <taxon>Spirochaetota</taxon>
        <taxon>Spirochaetia</taxon>
        <taxon>Leptospirales</taxon>
        <taxon>Leptospiraceae</taxon>
        <taxon>Leptospira</taxon>
    </lineage>
</organism>
<comment type="function">
    <text evidence="1">Nucleotide-binding protein.</text>
</comment>
<comment type="similarity">
    <text evidence="1">Belongs to the YajQ family.</text>
</comment>
<sequence length="165" mass="18515">MAQDPSFDIVSKLERPELQNAVSQAMTEIQTRFDFKGSNSEIKITDDQLVLTSENEIKLKQVIDVLTTKMAKRGIGLKAFDFDSKVESATGQTVRMKVKIQNGLDKEQTKQITTLIKDQKLKVQATIQGDSVRVVGKKKDDLQEVMAAIRNANFNFDANFTNFKG</sequence>
<keyword id="KW-0547">Nucleotide-binding</keyword>
<protein>
    <recommendedName>
        <fullName evidence="1">Nucleotide-binding protein LBF_1338</fullName>
    </recommendedName>
</protein>
<accession>B0SGD4</accession>
<gene>
    <name type="ordered locus">LBF_1338</name>
</gene>
<reference key="1">
    <citation type="journal article" date="2008" name="PLoS ONE">
        <title>Genome sequence of the saprophyte Leptospira biflexa provides insights into the evolution of Leptospira and the pathogenesis of leptospirosis.</title>
        <authorList>
            <person name="Picardeau M."/>
            <person name="Bulach D.M."/>
            <person name="Bouchier C."/>
            <person name="Zuerner R.L."/>
            <person name="Zidane N."/>
            <person name="Wilson P.J."/>
            <person name="Creno S."/>
            <person name="Kuczek E.S."/>
            <person name="Bommezzadri S."/>
            <person name="Davis J.C."/>
            <person name="McGrath A."/>
            <person name="Johnson M.J."/>
            <person name="Boursaux-Eude C."/>
            <person name="Seemann T."/>
            <person name="Rouy Z."/>
            <person name="Coppel R.L."/>
            <person name="Rood J.I."/>
            <person name="Lajus A."/>
            <person name="Davies J.K."/>
            <person name="Medigue C."/>
            <person name="Adler B."/>
        </authorList>
    </citation>
    <scope>NUCLEOTIDE SEQUENCE [LARGE SCALE GENOMIC DNA]</scope>
    <source>
        <strain>Patoc 1 / Ames</strain>
    </source>
</reference>